<protein>
    <recommendedName>
        <fullName evidence="1">Small ribosomal subunit protein uS19c</fullName>
    </recommendedName>
    <alternativeName>
        <fullName evidence="2">30S ribosomal protein S19, chloroplastic</fullName>
    </alternativeName>
</protein>
<name>RR19_LOBMA</name>
<reference key="1">
    <citation type="submission" date="2007-03" db="EMBL/GenBank/DDBJ databases">
        <title>Sequencing analysis of Lobularia maritima chloroplast DNA.</title>
        <authorList>
            <person name="Hosouchi T."/>
            <person name="Tsuruoka H."/>
            <person name="Kotani H."/>
        </authorList>
    </citation>
    <scope>NUCLEOTIDE SEQUENCE [LARGE SCALE GENOMIC DNA]</scope>
</reference>
<gene>
    <name evidence="1" type="primary">rps19</name>
</gene>
<accession>A4QLN4</accession>
<sequence length="92" mass="10652">MTRSLKKNPFVAKHLLRKIEKLNTKAEKEIIRTWSRASTIIPTMIGHTIAIHNGREHLPVYIIDLMVGHKLGEFSPTINFRGHAKNDNRSRR</sequence>
<keyword id="KW-0150">Chloroplast</keyword>
<keyword id="KW-0934">Plastid</keyword>
<keyword id="KW-0687">Ribonucleoprotein</keyword>
<keyword id="KW-0689">Ribosomal protein</keyword>
<keyword id="KW-0694">RNA-binding</keyword>
<keyword id="KW-0699">rRNA-binding</keyword>
<proteinExistence type="inferred from homology"/>
<feature type="chain" id="PRO_0000354361" description="Small ribosomal subunit protein uS19c">
    <location>
        <begin position="1"/>
        <end position="92"/>
    </location>
</feature>
<comment type="function">
    <text evidence="1">Protein S19 forms a complex with S13 that binds strongly to the 16S ribosomal RNA.</text>
</comment>
<comment type="subcellular location">
    <subcellularLocation>
        <location>Plastid</location>
        <location>Chloroplast</location>
    </subcellularLocation>
</comment>
<comment type="similarity">
    <text evidence="1">Belongs to the universal ribosomal protein uS19 family.</text>
</comment>
<dbReference type="EMBL" id="AP009375">
    <property type="protein sequence ID" value="BAF50589.1"/>
    <property type="molecule type" value="Genomic_DNA"/>
</dbReference>
<dbReference type="RefSeq" id="YP_001123765.1">
    <property type="nucleotide sequence ID" value="NC_009274.1"/>
</dbReference>
<dbReference type="SMR" id="A4QLN4"/>
<dbReference type="GeneID" id="4964931"/>
<dbReference type="GO" id="GO:0009507">
    <property type="term" value="C:chloroplast"/>
    <property type="evidence" value="ECO:0007669"/>
    <property type="project" value="UniProtKB-SubCell"/>
</dbReference>
<dbReference type="GO" id="GO:0005763">
    <property type="term" value="C:mitochondrial small ribosomal subunit"/>
    <property type="evidence" value="ECO:0007669"/>
    <property type="project" value="TreeGrafter"/>
</dbReference>
<dbReference type="GO" id="GO:0019843">
    <property type="term" value="F:rRNA binding"/>
    <property type="evidence" value="ECO:0007669"/>
    <property type="project" value="UniProtKB-UniRule"/>
</dbReference>
<dbReference type="GO" id="GO:0003735">
    <property type="term" value="F:structural constituent of ribosome"/>
    <property type="evidence" value="ECO:0007669"/>
    <property type="project" value="InterPro"/>
</dbReference>
<dbReference type="GO" id="GO:0000028">
    <property type="term" value="P:ribosomal small subunit assembly"/>
    <property type="evidence" value="ECO:0007669"/>
    <property type="project" value="TreeGrafter"/>
</dbReference>
<dbReference type="GO" id="GO:0006412">
    <property type="term" value="P:translation"/>
    <property type="evidence" value="ECO:0007669"/>
    <property type="project" value="UniProtKB-UniRule"/>
</dbReference>
<dbReference type="FunFam" id="3.30.860.10:FF:000001">
    <property type="entry name" value="30S ribosomal protein S19"/>
    <property type="match status" value="1"/>
</dbReference>
<dbReference type="Gene3D" id="3.30.860.10">
    <property type="entry name" value="30s Ribosomal Protein S19, Chain A"/>
    <property type="match status" value="1"/>
</dbReference>
<dbReference type="HAMAP" id="MF_00531">
    <property type="entry name" value="Ribosomal_uS19"/>
    <property type="match status" value="1"/>
</dbReference>
<dbReference type="InterPro" id="IPR002222">
    <property type="entry name" value="Ribosomal_uS19"/>
</dbReference>
<dbReference type="InterPro" id="IPR005732">
    <property type="entry name" value="Ribosomal_uS19_bac-type"/>
</dbReference>
<dbReference type="InterPro" id="IPR020934">
    <property type="entry name" value="Ribosomal_uS19_CS"/>
</dbReference>
<dbReference type="InterPro" id="IPR023575">
    <property type="entry name" value="Ribosomal_uS19_SF"/>
</dbReference>
<dbReference type="NCBIfam" id="TIGR01050">
    <property type="entry name" value="rpsS_bact"/>
    <property type="match status" value="1"/>
</dbReference>
<dbReference type="PANTHER" id="PTHR11880">
    <property type="entry name" value="RIBOSOMAL PROTEIN S19P FAMILY MEMBER"/>
    <property type="match status" value="1"/>
</dbReference>
<dbReference type="PANTHER" id="PTHR11880:SF8">
    <property type="entry name" value="SMALL RIBOSOMAL SUBUNIT PROTEIN US19M"/>
    <property type="match status" value="1"/>
</dbReference>
<dbReference type="Pfam" id="PF00203">
    <property type="entry name" value="Ribosomal_S19"/>
    <property type="match status" value="1"/>
</dbReference>
<dbReference type="PIRSF" id="PIRSF002144">
    <property type="entry name" value="Ribosomal_S19"/>
    <property type="match status" value="1"/>
</dbReference>
<dbReference type="PRINTS" id="PR00975">
    <property type="entry name" value="RIBOSOMALS19"/>
</dbReference>
<dbReference type="SUPFAM" id="SSF54570">
    <property type="entry name" value="Ribosomal protein S19"/>
    <property type="match status" value="1"/>
</dbReference>
<dbReference type="PROSITE" id="PS00323">
    <property type="entry name" value="RIBOSOMAL_S19"/>
    <property type="match status" value="1"/>
</dbReference>
<geneLocation type="chloroplast"/>
<organism>
    <name type="scientific">Lobularia maritima</name>
    <name type="common">Sweet alyssum</name>
    <name type="synonym">Alyssum maritimum</name>
    <dbReference type="NCBI Taxonomy" id="226051"/>
    <lineage>
        <taxon>Eukaryota</taxon>
        <taxon>Viridiplantae</taxon>
        <taxon>Streptophyta</taxon>
        <taxon>Embryophyta</taxon>
        <taxon>Tracheophyta</taxon>
        <taxon>Spermatophyta</taxon>
        <taxon>Magnoliopsida</taxon>
        <taxon>eudicotyledons</taxon>
        <taxon>Gunneridae</taxon>
        <taxon>Pentapetalae</taxon>
        <taxon>rosids</taxon>
        <taxon>malvids</taxon>
        <taxon>Brassicales</taxon>
        <taxon>Brassicaceae</taxon>
        <taxon>Anastaticeae</taxon>
        <taxon>Lobularia</taxon>
    </lineage>
</organism>
<evidence type="ECO:0000255" key="1">
    <source>
        <dbReference type="HAMAP-Rule" id="MF_00531"/>
    </source>
</evidence>
<evidence type="ECO:0000305" key="2"/>